<evidence type="ECO:0000255" key="1">
    <source>
        <dbReference type="HAMAP-Rule" id="MF_00617"/>
    </source>
</evidence>
<name>MPGP_ECO55</name>
<feature type="chain" id="PRO_1000191303" description="Mannosyl-3-phosphoglycerate phosphatase">
    <location>
        <begin position="1"/>
        <end position="271"/>
    </location>
</feature>
<feature type="active site" description="Nucleophile" evidence="1">
    <location>
        <position position="13"/>
    </location>
</feature>
<feature type="binding site" evidence="1">
    <location>
        <position position="13"/>
    </location>
    <ligand>
        <name>Mg(2+)</name>
        <dbReference type="ChEBI" id="CHEBI:18420"/>
    </ligand>
</feature>
<feature type="binding site" evidence="1">
    <location>
        <position position="15"/>
    </location>
    <ligand>
        <name>Mg(2+)</name>
        <dbReference type="ChEBI" id="CHEBI:18420"/>
    </ligand>
</feature>
<feature type="binding site" evidence="1">
    <location>
        <position position="214"/>
    </location>
    <ligand>
        <name>Mg(2+)</name>
        <dbReference type="ChEBI" id="CHEBI:18420"/>
    </ligand>
</feature>
<accession>B7L8W6</accession>
<gene>
    <name type="ordered locus">EC55989_2174</name>
</gene>
<proteinExistence type="inferred from homology"/>
<comment type="catalytic activity">
    <reaction evidence="1">
        <text>2-O-(alpha-D-mannosyl)-3-phosphoglycerate + H2O = (2R)-2-O-(alpha-D-mannosyl)-glycerate + phosphate</text>
        <dbReference type="Rhea" id="RHEA:19309"/>
        <dbReference type="ChEBI" id="CHEBI:15377"/>
        <dbReference type="ChEBI" id="CHEBI:43474"/>
        <dbReference type="ChEBI" id="CHEBI:57541"/>
        <dbReference type="ChEBI" id="CHEBI:57744"/>
        <dbReference type="EC" id="3.1.3.70"/>
    </reaction>
</comment>
<comment type="cofactor">
    <cofactor evidence="1">
        <name>Mg(2+)</name>
        <dbReference type="ChEBI" id="CHEBI:18420"/>
    </cofactor>
</comment>
<comment type="subcellular location">
    <subcellularLocation>
        <location evidence="1">Cytoplasm</location>
    </subcellularLocation>
</comment>
<comment type="similarity">
    <text evidence="1">Belongs to the HAD-like hydrolase superfamily. MPGP family.</text>
</comment>
<organism>
    <name type="scientific">Escherichia coli (strain 55989 / EAEC)</name>
    <dbReference type="NCBI Taxonomy" id="585055"/>
    <lineage>
        <taxon>Bacteria</taxon>
        <taxon>Pseudomonadati</taxon>
        <taxon>Pseudomonadota</taxon>
        <taxon>Gammaproteobacteria</taxon>
        <taxon>Enterobacterales</taxon>
        <taxon>Enterobacteriaceae</taxon>
        <taxon>Escherichia</taxon>
    </lineage>
</organism>
<reference key="1">
    <citation type="journal article" date="2009" name="PLoS Genet.">
        <title>Organised genome dynamics in the Escherichia coli species results in highly diverse adaptive paths.</title>
        <authorList>
            <person name="Touchon M."/>
            <person name="Hoede C."/>
            <person name="Tenaillon O."/>
            <person name="Barbe V."/>
            <person name="Baeriswyl S."/>
            <person name="Bidet P."/>
            <person name="Bingen E."/>
            <person name="Bonacorsi S."/>
            <person name="Bouchier C."/>
            <person name="Bouvet O."/>
            <person name="Calteau A."/>
            <person name="Chiapello H."/>
            <person name="Clermont O."/>
            <person name="Cruveiller S."/>
            <person name="Danchin A."/>
            <person name="Diard M."/>
            <person name="Dossat C."/>
            <person name="Karoui M.E."/>
            <person name="Frapy E."/>
            <person name="Garry L."/>
            <person name="Ghigo J.M."/>
            <person name="Gilles A.M."/>
            <person name="Johnson J."/>
            <person name="Le Bouguenec C."/>
            <person name="Lescat M."/>
            <person name="Mangenot S."/>
            <person name="Martinez-Jehanne V."/>
            <person name="Matic I."/>
            <person name="Nassif X."/>
            <person name="Oztas S."/>
            <person name="Petit M.A."/>
            <person name="Pichon C."/>
            <person name="Rouy Z."/>
            <person name="Ruf C.S."/>
            <person name="Schneider D."/>
            <person name="Tourret J."/>
            <person name="Vacherie B."/>
            <person name="Vallenet D."/>
            <person name="Medigue C."/>
            <person name="Rocha E.P.C."/>
            <person name="Denamur E."/>
        </authorList>
    </citation>
    <scope>NUCLEOTIDE SEQUENCE [LARGE SCALE GENOMIC DNA]</scope>
    <source>
        <strain>55989 / EAEC</strain>
    </source>
</reference>
<sequence length="271" mass="30454">MFSIQQPLLVFSDLDGTLLDSHSYDWQPAAPWLTRLREANVPVILCSSKTSAEMLYLQKTLGLQGLPLIAENGAVIQLAEQWQEIDGFPRIISGISHGEISQVLNTLREKEHFKFTTFDDVDDATIAEWTGLSRSQAALTQLHEASVTLIWRDSDERMAQFTARLNELGLQFMQGARFWHVLDASAGKDQAANWIIATYQQLSGKRPTTLGLGDGPNDAPLLEVMDYAVIVKGLNREGVHLHDEDPARVWRTQREGPEGWREGLDHFFSAR</sequence>
<keyword id="KW-0963">Cytoplasm</keyword>
<keyword id="KW-0378">Hydrolase</keyword>
<keyword id="KW-0460">Magnesium</keyword>
<keyword id="KW-0479">Metal-binding</keyword>
<keyword id="KW-1185">Reference proteome</keyword>
<protein>
    <recommendedName>
        <fullName evidence="1">Mannosyl-3-phosphoglycerate phosphatase</fullName>
        <shortName evidence="1">MPGP</shortName>
        <ecNumber evidence="1">3.1.3.70</ecNumber>
    </recommendedName>
</protein>
<dbReference type="EC" id="3.1.3.70" evidence="1"/>
<dbReference type="EMBL" id="CU928145">
    <property type="protein sequence ID" value="CAU98048.1"/>
    <property type="molecule type" value="Genomic_DNA"/>
</dbReference>
<dbReference type="RefSeq" id="WP_000491522.1">
    <property type="nucleotide sequence ID" value="NC_011748.1"/>
</dbReference>
<dbReference type="SMR" id="B7L8W6"/>
<dbReference type="KEGG" id="eck:EC55989_2174"/>
<dbReference type="HOGENOM" id="CLU_063016_1_0_6"/>
<dbReference type="Proteomes" id="UP000000746">
    <property type="component" value="Chromosome"/>
</dbReference>
<dbReference type="GO" id="GO:0005829">
    <property type="term" value="C:cytosol"/>
    <property type="evidence" value="ECO:0007669"/>
    <property type="project" value="TreeGrafter"/>
</dbReference>
<dbReference type="GO" id="GO:0000287">
    <property type="term" value="F:magnesium ion binding"/>
    <property type="evidence" value="ECO:0007669"/>
    <property type="project" value="UniProtKB-ARBA"/>
</dbReference>
<dbReference type="GO" id="GO:0050531">
    <property type="term" value="F:mannosyl-3-phosphoglycerate phosphatase activity"/>
    <property type="evidence" value="ECO:0007669"/>
    <property type="project" value="UniProtKB-UniRule"/>
</dbReference>
<dbReference type="GO" id="GO:0051479">
    <property type="term" value="P:mannosylglycerate biosynthetic process"/>
    <property type="evidence" value="ECO:0007669"/>
    <property type="project" value="InterPro"/>
</dbReference>
<dbReference type="CDD" id="cd07507">
    <property type="entry name" value="HAD_Pase"/>
    <property type="match status" value="1"/>
</dbReference>
<dbReference type="Gene3D" id="3.40.50.1000">
    <property type="entry name" value="HAD superfamily/HAD-like"/>
    <property type="match status" value="1"/>
</dbReference>
<dbReference type="Gene3D" id="3.30.980.20">
    <property type="entry name" value="Putative mannosyl-3-phosphoglycerate phosphatase, domain 2"/>
    <property type="match status" value="1"/>
</dbReference>
<dbReference type="HAMAP" id="MF_00617">
    <property type="entry name" value="MPGP_rel"/>
    <property type="match status" value="1"/>
</dbReference>
<dbReference type="InterPro" id="IPR036412">
    <property type="entry name" value="HAD-like_sf"/>
</dbReference>
<dbReference type="InterPro" id="IPR006381">
    <property type="entry name" value="HAD-SF-IIB-MPGP"/>
</dbReference>
<dbReference type="InterPro" id="IPR006379">
    <property type="entry name" value="HAD-SF_hydro_IIB"/>
</dbReference>
<dbReference type="InterPro" id="IPR023214">
    <property type="entry name" value="HAD_sf"/>
</dbReference>
<dbReference type="InterPro" id="IPR012815">
    <property type="entry name" value="MPG_Pase"/>
</dbReference>
<dbReference type="NCBIfam" id="TIGR01484">
    <property type="entry name" value="HAD-SF-IIB"/>
    <property type="match status" value="1"/>
</dbReference>
<dbReference type="NCBIfam" id="TIGR01486">
    <property type="entry name" value="HAD-SF-IIB-MPGP"/>
    <property type="match status" value="1"/>
</dbReference>
<dbReference type="NCBIfam" id="TIGR02463">
    <property type="entry name" value="MPGP_rel"/>
    <property type="match status" value="1"/>
</dbReference>
<dbReference type="NCBIfam" id="NF002976">
    <property type="entry name" value="PRK03669.1"/>
    <property type="match status" value="1"/>
</dbReference>
<dbReference type="PANTHER" id="PTHR10000:SF8">
    <property type="entry name" value="HAD SUPERFAMILY HYDROLASE-LIKE, TYPE 3"/>
    <property type="match status" value="1"/>
</dbReference>
<dbReference type="PANTHER" id="PTHR10000">
    <property type="entry name" value="PHOSPHOSERINE PHOSPHATASE"/>
    <property type="match status" value="1"/>
</dbReference>
<dbReference type="Pfam" id="PF08282">
    <property type="entry name" value="Hydrolase_3"/>
    <property type="match status" value="1"/>
</dbReference>
<dbReference type="SFLD" id="SFLDG01142">
    <property type="entry name" value="C2.B.2:_Mannosyl-3-phosphoglyc"/>
    <property type="match status" value="1"/>
</dbReference>
<dbReference type="SFLD" id="SFLDS00003">
    <property type="entry name" value="Haloacid_Dehalogenase"/>
    <property type="match status" value="1"/>
</dbReference>
<dbReference type="SUPFAM" id="SSF56784">
    <property type="entry name" value="HAD-like"/>
    <property type="match status" value="1"/>
</dbReference>